<comment type="function">
    <text evidence="1">Redox regulated molecular chaperone. Protects both thermally unfolding and oxidatively damaged proteins from irreversible aggregation. Plays an important role in the bacterial defense system toward oxidative stress.</text>
</comment>
<comment type="subcellular location">
    <subcellularLocation>
        <location evidence="1">Cytoplasm</location>
    </subcellularLocation>
</comment>
<comment type="PTM">
    <text evidence="1">Under oxidizing conditions two disulfide bonds are formed involving the reactive cysteines. Under reducing conditions zinc is bound to the reactive cysteines and the protein is inactive.</text>
</comment>
<comment type="similarity">
    <text evidence="1">Belongs to the HSP33 family.</text>
</comment>
<accession>P0DB68</accession>
<accession>Q8K8U9</accession>
<evidence type="ECO:0000255" key="1">
    <source>
        <dbReference type="HAMAP-Rule" id="MF_00117"/>
    </source>
</evidence>
<keyword id="KW-0143">Chaperone</keyword>
<keyword id="KW-0963">Cytoplasm</keyword>
<keyword id="KW-1015">Disulfide bond</keyword>
<keyword id="KW-0676">Redox-active center</keyword>
<keyword id="KW-0862">Zinc</keyword>
<name>HSLO_STRP3</name>
<proteinExistence type="inferred from homology"/>
<organism>
    <name type="scientific">Streptococcus pyogenes serotype M3 (strain ATCC BAA-595 / MGAS315)</name>
    <dbReference type="NCBI Taxonomy" id="198466"/>
    <lineage>
        <taxon>Bacteria</taxon>
        <taxon>Bacillati</taxon>
        <taxon>Bacillota</taxon>
        <taxon>Bacilli</taxon>
        <taxon>Lactobacillales</taxon>
        <taxon>Streptococcaceae</taxon>
        <taxon>Streptococcus</taxon>
    </lineage>
</organism>
<feature type="chain" id="PRO_0000192213" description="33 kDa chaperonin">
    <location>
        <begin position="1"/>
        <end position="290"/>
    </location>
</feature>
<feature type="disulfide bond" description="Redox-active" evidence="1">
    <location>
        <begin position="235"/>
        <end position="237"/>
    </location>
</feature>
<feature type="disulfide bond" description="Redox-active" evidence="1">
    <location>
        <begin position="268"/>
        <end position="271"/>
    </location>
</feature>
<protein>
    <recommendedName>
        <fullName evidence="1">33 kDa chaperonin</fullName>
    </recommendedName>
    <alternativeName>
        <fullName evidence="1">Heat shock protein 33 homolog</fullName>
        <shortName evidence="1">HSP33</shortName>
    </alternativeName>
</protein>
<dbReference type="EMBL" id="AE014074">
    <property type="protein sequence ID" value="AAM78703.1"/>
    <property type="molecule type" value="Genomic_DNA"/>
</dbReference>
<dbReference type="RefSeq" id="WP_011054120.1">
    <property type="nucleotide sequence ID" value="NC_004070.1"/>
</dbReference>
<dbReference type="SMR" id="P0DB68"/>
<dbReference type="KEGG" id="spg:SpyM3_0096"/>
<dbReference type="HOGENOM" id="CLU_054493_1_0_9"/>
<dbReference type="Proteomes" id="UP000000564">
    <property type="component" value="Chromosome"/>
</dbReference>
<dbReference type="GO" id="GO:0005737">
    <property type="term" value="C:cytoplasm"/>
    <property type="evidence" value="ECO:0007669"/>
    <property type="project" value="UniProtKB-SubCell"/>
</dbReference>
<dbReference type="GO" id="GO:0044183">
    <property type="term" value="F:protein folding chaperone"/>
    <property type="evidence" value="ECO:0007669"/>
    <property type="project" value="TreeGrafter"/>
</dbReference>
<dbReference type="GO" id="GO:0051082">
    <property type="term" value="F:unfolded protein binding"/>
    <property type="evidence" value="ECO:0007669"/>
    <property type="project" value="UniProtKB-UniRule"/>
</dbReference>
<dbReference type="GO" id="GO:0042026">
    <property type="term" value="P:protein refolding"/>
    <property type="evidence" value="ECO:0007669"/>
    <property type="project" value="TreeGrafter"/>
</dbReference>
<dbReference type="CDD" id="cd00498">
    <property type="entry name" value="Hsp33"/>
    <property type="match status" value="1"/>
</dbReference>
<dbReference type="Gene3D" id="3.55.30.10">
    <property type="entry name" value="Hsp33 domain"/>
    <property type="match status" value="1"/>
</dbReference>
<dbReference type="Gene3D" id="3.90.1280.10">
    <property type="entry name" value="HSP33 redox switch-like"/>
    <property type="match status" value="1"/>
</dbReference>
<dbReference type="HAMAP" id="MF_00117">
    <property type="entry name" value="HslO"/>
    <property type="match status" value="1"/>
</dbReference>
<dbReference type="InterPro" id="IPR000397">
    <property type="entry name" value="Heat_shock_Hsp33"/>
</dbReference>
<dbReference type="InterPro" id="IPR016154">
    <property type="entry name" value="Heat_shock_Hsp33_C"/>
</dbReference>
<dbReference type="InterPro" id="IPR016153">
    <property type="entry name" value="Heat_shock_Hsp33_N"/>
</dbReference>
<dbReference type="NCBIfam" id="NF001033">
    <property type="entry name" value="PRK00114.1"/>
    <property type="match status" value="1"/>
</dbReference>
<dbReference type="PANTHER" id="PTHR30111">
    <property type="entry name" value="33 KDA CHAPERONIN"/>
    <property type="match status" value="1"/>
</dbReference>
<dbReference type="PANTHER" id="PTHR30111:SF1">
    <property type="entry name" value="33 KDA CHAPERONIN"/>
    <property type="match status" value="1"/>
</dbReference>
<dbReference type="Pfam" id="PF01430">
    <property type="entry name" value="HSP33"/>
    <property type="match status" value="1"/>
</dbReference>
<dbReference type="PIRSF" id="PIRSF005261">
    <property type="entry name" value="Heat_shock_Hsp33"/>
    <property type="match status" value="1"/>
</dbReference>
<dbReference type="SUPFAM" id="SSF64397">
    <property type="entry name" value="Hsp33 domain"/>
    <property type="match status" value="1"/>
</dbReference>
<dbReference type="SUPFAM" id="SSF118352">
    <property type="entry name" value="HSP33 redox switch-like"/>
    <property type="match status" value="1"/>
</dbReference>
<gene>
    <name evidence="1" type="primary">hslO</name>
    <name type="ordered locus">SpyM3_0096</name>
</gene>
<reference key="1">
    <citation type="journal article" date="2002" name="Proc. Natl. Acad. Sci. U.S.A.">
        <title>Genome sequence of a serotype M3 strain of group A Streptococcus: phage-encoded toxins, the high-virulence phenotype, and clone emergence.</title>
        <authorList>
            <person name="Beres S.B."/>
            <person name="Sylva G.L."/>
            <person name="Barbian K.D."/>
            <person name="Lei B."/>
            <person name="Hoff J.S."/>
            <person name="Mammarella N.D."/>
            <person name="Liu M.-Y."/>
            <person name="Smoot J.C."/>
            <person name="Porcella S.F."/>
            <person name="Parkins L.D."/>
            <person name="Campbell D.S."/>
            <person name="Smith T.M."/>
            <person name="McCormick J.K."/>
            <person name="Leung D.Y.M."/>
            <person name="Schlievert P.M."/>
            <person name="Musser J.M."/>
        </authorList>
    </citation>
    <scope>NUCLEOTIDE SEQUENCE [LARGE SCALE GENOMIC DNA]</scope>
    <source>
        <strain>ATCC BAA-595 / MGAS315</strain>
    </source>
</reference>
<sequence length="290" mass="31493">MDKIIKSIAQSGAFRAYVLDSTETVALAQEKHNTLSSSTVALGRTLIANQILAANQKGDSKITVKVIGDSSFGHIISVADTKGHVKGYIQNTGVDIKKTATGEVLVGPFMGNGHFVTIIDYGTGNPYTSTTPLITGEIGEDFAYYLTESEQTPSAIGLNVLLDENDKVKVAGGFMVQVLPGASEEEIARYEKRLQEMPAISHLLASKNHVEALLEAIYGDEPYKRLSEEPLSFQCDCSRERFEAALMTLPKADLQAMIDEDKGAEIVCQFCGTKYQFNESDLEALINDKA</sequence>